<evidence type="ECO:0000250" key="1"/>
<evidence type="ECO:0000250" key="2">
    <source>
        <dbReference type="UniProtKB" id="P07293"/>
    </source>
</evidence>
<evidence type="ECO:0000250" key="3">
    <source>
        <dbReference type="UniProtKB" id="Q9JIS7"/>
    </source>
</evidence>
<evidence type="ECO:0000255" key="4"/>
<evidence type="ECO:0000256" key="5">
    <source>
        <dbReference type="SAM" id="MobiDB-lite"/>
    </source>
</evidence>
<evidence type="ECO:0000269" key="6">
    <source>
    </source>
</evidence>
<evidence type="ECO:0000269" key="7">
    <source>
    </source>
</evidence>
<evidence type="ECO:0000269" key="8">
    <source>
    </source>
</evidence>
<evidence type="ECO:0000269" key="9">
    <source>
    </source>
</evidence>
<evidence type="ECO:0000269" key="10">
    <source>
    </source>
</evidence>
<evidence type="ECO:0000269" key="11">
    <source>
    </source>
</evidence>
<evidence type="ECO:0000269" key="12">
    <source>
    </source>
</evidence>
<evidence type="ECO:0000269" key="13">
    <source>
    </source>
</evidence>
<evidence type="ECO:0000269" key="14">
    <source>
    </source>
</evidence>
<evidence type="ECO:0000269" key="15">
    <source>
    </source>
</evidence>
<evidence type="ECO:0000269" key="16">
    <source>
    </source>
</evidence>
<evidence type="ECO:0000269" key="17">
    <source>
    </source>
</evidence>
<evidence type="ECO:0000303" key="18">
    <source>
    </source>
</evidence>
<evidence type="ECO:0000303" key="19">
    <source>
    </source>
</evidence>
<evidence type="ECO:0000303" key="20">
    <source>
    </source>
</evidence>
<evidence type="ECO:0000303" key="21">
    <source>
    </source>
</evidence>
<evidence type="ECO:0000305" key="22"/>
<evidence type="ECO:0000312" key="23">
    <source>
        <dbReference type="HGNC" id="HGNC:1393"/>
    </source>
</evidence>
<accession>O60840</accession>
<accession>A6NI29</accession>
<accession>F5CIQ9</accession>
<accession>O43901</accession>
<accession>O95226</accession>
<accession>Q9UHB1</accession>
<protein>
    <recommendedName>
        <fullName evidence="22">Voltage-dependent L-type calcium channel subunit alpha-1F</fullName>
    </recommendedName>
    <alternativeName>
        <fullName>Voltage-gated calcium channel subunit alpha Cav1.4</fullName>
    </alternativeName>
</protein>
<keyword id="KW-0025">Alternative splicing</keyword>
<keyword id="KW-0106">Calcium</keyword>
<keyword id="KW-0107">Calcium channel</keyword>
<keyword id="KW-0109">Calcium transport</keyword>
<keyword id="KW-0182">Cone-rod dystrophy</keyword>
<keyword id="KW-1014">Congenital stationary night blindness</keyword>
<keyword id="KW-0225">Disease variant</keyword>
<keyword id="KW-1015">Disulfide bond</keyword>
<keyword id="KW-0325">Glycoprotein</keyword>
<keyword id="KW-0407">Ion channel</keyword>
<keyword id="KW-0406">Ion transport</keyword>
<keyword id="KW-0472">Membrane</keyword>
<keyword id="KW-0479">Metal-binding</keyword>
<keyword id="KW-0597">Phosphoprotein</keyword>
<keyword id="KW-1267">Proteomics identification</keyword>
<keyword id="KW-1185">Reference proteome</keyword>
<keyword id="KW-0677">Repeat</keyword>
<keyword id="KW-0716">Sensory transduction</keyword>
<keyword id="KW-0812">Transmembrane</keyword>
<keyword id="KW-1133">Transmembrane helix</keyword>
<keyword id="KW-0813">Transport</keyword>
<keyword id="KW-0844">Vision</keyword>
<keyword id="KW-0851">Voltage-gated channel</keyword>
<comment type="function">
    <molecule>Isoform 1</molecule>
    <text evidence="10 15">Voltage-sensitive calcium channels (VSCC) mediate the entry of calcium ions into excitable cells and are also involved in a variety of calcium-dependent processes, including muscle contraction, hormone or neurotransmitter release, gene expression, cell motility, cell division and cell death. The isoform alpha-1F gives rise to L-type calcium currents. Long-lasting (L-type) calcium channels belong to the 'high-voltage activated' (HVA) group. They are blocked by dihydropyridines (DHP), phenylalkylamines, and by benzothiazepines. Activates at more negative voltages and does not undergo calcium-dependent inactivation (CDI), due to incoming calcium ions, during depolarization.</text>
</comment>
<comment type="function">
    <molecule>Isoform 4</molecule>
    <text evidence="15">Voltage-dependent L-type calcium channel activates at more hyperpolarized voltages and exhibits a robust calcium-dependent inactivation (CDI), due to incoming calcium ions, during depolarizations.</text>
</comment>
<comment type="function">
    <molecule>Isoform 5</molecule>
    <text evidence="15">Voltage-sensitive calcium channels (VSCC) mediate the entry of calcium ions into excitable cells and are also involved in a variety of calcium-dependent processes, including muscle contraction, hormone or neurotransmitter release, gene expression, cell motility, cell division and cell death.</text>
</comment>
<comment type="function">
    <molecule>Isoform 6</molecule>
    <text evidence="15">Voltage-dependent L-type calcium channel activates at more hyperpolarized voltages and exhibits a robust calcium-dependent inactivation (CDI), due to incoming calcium ions, during depolarizations.</text>
</comment>
<comment type="catalytic activity">
    <molecule>Isoform 1</molecule>
    <reaction evidence="10 15">
        <text>Ca(2+)(in) = Ca(2+)(out)</text>
        <dbReference type="Rhea" id="RHEA:29671"/>
        <dbReference type="ChEBI" id="CHEBI:29108"/>
    </reaction>
</comment>
<comment type="catalytic activity">
    <molecule>Isoform 4</molecule>
    <reaction evidence="15">
        <text>Ca(2+)(in) = Ca(2+)(out)</text>
        <dbReference type="Rhea" id="RHEA:29671"/>
        <dbReference type="ChEBI" id="CHEBI:29108"/>
    </reaction>
</comment>
<comment type="catalytic activity">
    <molecule>Isoform 5</molecule>
    <reaction evidence="15">
        <text>Ca(2+)(in) = Ca(2+)(out)</text>
        <dbReference type="Rhea" id="RHEA:29671"/>
        <dbReference type="ChEBI" id="CHEBI:29108"/>
    </reaction>
</comment>
<comment type="catalytic activity">
    <molecule>Isoform 6</molecule>
    <reaction evidence="15">
        <text>Ca(2+)(in) = Ca(2+)(out)</text>
        <dbReference type="Rhea" id="RHEA:29671"/>
        <dbReference type="ChEBI" id="CHEBI:29108"/>
    </reaction>
</comment>
<comment type="subunit">
    <text evidence="3 22">Voltage-dependent calcium channels are multisubunit complexes, consisting of alpha-1, alpha-2, beta and delta subunits in a 1:1:1:1 ratio. The channel activity is directed by the pore-forming and voltage-sensitive alpha-1 subunit. In many cases, this subunit is sufficient to generate voltage-sensitive calcium channel activity. The auxiliary subunits beta and alpha-2/delta linked by a disulfide bridge regulate the channel activity. Interacts (via IQ domain) with CABP4; in a calcium independent manner (By similarity).</text>
</comment>
<comment type="subunit">
    <molecule>Isoform 4</molecule>
    <text evidence="15">Interacts with CABP4; suppresses robust calcium-dependent inactivation of channel without enhancing the hyperpolarized voltage-dependent activation (PubMed:27226626).</text>
</comment>
<comment type="subcellular location">
    <subcellularLocation>
        <location evidence="4">Membrane</location>
        <topology evidence="4">Multi-pass membrane protein</topology>
    </subcellularLocation>
</comment>
<comment type="alternative products">
    <event type="alternative splicing"/>
    <isoform>
        <id>O60840-1</id>
        <name>1</name>
        <name evidence="19">Cav1.4FL</name>
        <sequence type="displayed"/>
    </isoform>
    <isoform>
        <id>O60840-2</id>
        <name>2</name>
        <sequence type="described" ref="VSP_036785"/>
    </isoform>
    <isoform>
        <id>O60840-4</id>
        <name>3</name>
        <sequence type="described" ref="VSP_045172"/>
    </isoform>
    <isoform>
        <id>O60840-5</id>
        <name>4</name>
        <name evidence="19">Cav1.4Deltaex p45,47</name>
        <sequence type="described" ref="VSP_058923 VSP_058924"/>
    </isoform>
    <isoform>
        <id>O60840-6</id>
        <name>5</name>
        <name evidence="19">Cav1.4Deltaex p45</name>
        <sequence type="described" ref="VSP_058923"/>
    </isoform>
    <isoform>
        <id>O60840-7</id>
        <name>6</name>
        <name evidence="19">Cav1.4Deltaex 47</name>
        <sequence type="described" ref="VSP_058924"/>
    </isoform>
</comment>
<comment type="tissue specificity">
    <text evidence="6 15">Expression in skeletal muscle and retina (PubMed:10873387). Isoform 4 is expressed in retina (PubMed:27226626).</text>
</comment>
<comment type="domain">
    <text>Each of the four internal repeats contains five hydrophobic transmembrane segments (S1, S2, S3, S5, S6) and one positively charged transmembrane segment (S4). S4 segments probably represent the voltage-sensor and are characterized by a series of positively charged amino acids at every third position.</text>
</comment>
<comment type="disease" evidence="7 8 9 10 14 16 17">
    <disease id="DI-00376">
        <name>Night blindness, congenital stationary, 2A</name>
        <acronym>CSNB2A</acronym>
        <description>A non-progressive retinal disorder characterized by impaired night vision, often associated with nystagmus and myopia.</description>
        <dbReference type="MIM" id="300071"/>
    </disease>
    <text>The disease is caused by variants affecting the gene represented in this entry.</text>
</comment>
<comment type="disease" evidence="11">
    <disease id="DI-00328">
        <name>Cone-rod dystrophy, X-linked 3</name>
        <acronym>CORDX3</acronym>
        <description>An inherited retinal dystrophy characterized by retinal pigment deposits visible on fundus examination, predominantly in the macular region, and initial loss of cone photoreceptors followed by rod degeneration. This leads to decreased visual acuity and sensitivity in the central visual field, followed by loss of peripheral vision. Severe loss of vision occurs earlier than in retinitis pigmentosa, due to cone photoreceptors degenerating at a higher rate than rod photoreceptors.</description>
        <dbReference type="MIM" id="300476"/>
    </disease>
    <text>The disease is caused by variants affecting the gene represented in this entry.</text>
</comment>
<comment type="disease" evidence="13 14">
    <disease id="DI-01163">
        <name>Aaland island eye disease</name>
        <acronym>AIED</acronym>
        <description>A retinal disease characterized by a combination of fundus hypopigmentation, decreased visual acuity due to foveal hypoplasia, nystagmus, astigmatism, protan color vision defect, myopia, and defective dark adaptation. Except for progression of axial myopia, the disease can be considered to be a stationary condition. Electroretinography reveals abnormalities in both photopic and scotopic functions.</description>
        <dbReference type="MIM" id="300600"/>
    </disease>
    <text>The disease is caused by variants affecting the gene represented in this entry.</text>
</comment>
<comment type="similarity">
    <text evidence="22">Belongs to the calcium channel alpha-1 subunit (TC 1.A.1.11) family. CACNA1F subfamily.</text>
</comment>
<comment type="sequence caution" evidence="22">
    <conflict type="erroneous gene model prediction">
        <sequence resource="EMBL-CDS" id="AAB92359"/>
    </conflict>
</comment>
<gene>
    <name evidence="23" type="primary">CACNA1F</name>
    <name type="synonym">CACNAF1</name>
</gene>
<name>CAC1F_HUMAN</name>
<sequence length="1977" mass="220678">MSESEGGKDTTPEPSPANGAGPGPEWGLCPGPPAVEGESSGASGLGTPKRRNQHSKHKTVAVASAQRSPRALFCLTLANPLRRSCISIVEWKPFDILILLTIFANCVALGVYIPFPEDDSNTANHNLEQVEYVFLVIFTVETVLKIVAYGLVLHPSAYIRNGWNLLDFIIVVVGLFSVLLEQGPGRPGDAPHTGGKPGGFDVKALRAFRVLRPLRLVSGVPSLHIVLNSIMKALVPLLHIALLVLFVIIIYAIIGLELFLGRMHKTCYFLGSDMEAEEDPSPCASSGSGRACTLNQTECRGRWPGPNGGITNFDNFFFAMLTVFQCVTMEGWTDVLYWMQDAMGYELPWVYFVSLVIFGSFFVLNLVLGVLSGEFSKEREKAKARGDFQKQREKQQMEEDLRGYLDWITQAEELDMEDPSADDNLGSMAEEGRAGHRPQLAELTNRRRGRLRWFSHSTRSTHSTSSHASLPASDTGSMTETQGDEDEEEGALASCTRCLNKIMKTRVCRRLRRANRVLRARCRRAVKSNACYWAVLLLVFLNTLTIASEHHGQPVWLTQIQEYANKVLLCLFTVEMLLKLYGLGPSAYVSSFFNRFDCFVVCGGILETTLVEVGAMQPLGISVLRCVRLLRIFKVTRHWASLSNLVASLLNSMKSIASLLLLLFLFIIIFSLLGMQLFGGKFNFDQTHTKRSTFDTFPQALLTVFQILTGEDWNVVMYDGIMAYGGPFFPGMLVCIYFIILFICGNYILLNVFLAIAVDNLASGDAGTAKDKGGEKSNEKDLPQENEGLVPGVEKEEEEGARREGADMEEEEEEEEEEEEEEEEEGAGGVELLQEVVPKEKVVPIPEGSAFFCLSQTNPLRKGCHTLIHHHVFTNLILVFIILSSVSLAAEDPIRAHSFRNHILGYFDYAFTSIFTVEILLKMTVFGAFLHRGSFCRSWFNMLDLLVVSVSLISFGIHSSAISVVKILRVLRVLRPLRAINRAKGLKHVVQCVFVAIRTIGNIMIVTTLLQFMFACIGVQLFKGKFYTCTDEAKHTPQECKGSFLVYPDGDVSRPLVRERLWVNSDFNFDNVLSAMMALFTVSTFEGWPALLYKAIDAYAEDHGPIYNYRVEISVFFIVYIIIIAFFMMNIFVGFVIITFRAQGEQEYQNCELDKNQRQCVEYALKAQPLRRYIPKNPHQYRVWATVNSAAFEYLMFLLILLNTVALAMQHYEQTAPFNYAMDILNMVFTGLFTIEMVLKIIAFKPKHYFTDAWNTFDALIVVGSIVDIAVTEVNNGGHLGESSEDSSRISITFFRLFRVMRLVKLLSKGEGIRTLLWTFIKSFQALPYVALLIAMIFFIYAVIGMQMFGKVALQDGTQINRNNNFQTFPQAVLLLFRCATGEAWQEIMLASLPGNRCDPESDFGPGEEFTCGSNFAIAYFISFFMLCAFLIINLFVAVIMDNFDYLTRDWSILGPHHLDEFKRIWSEYDPGAKGRIKHLDVVALLRRIQPPLGFGKLCPHRVACKRLVAMNMPLNSDGTVTFNATLFALVRTSLKIKTEGNLEQANQELRIVIKKIWKRMKQKLLDEVIPPPDEEEVTVGKFYATFLIQDYFRKFRRRKEKGLLGNDAAPSTSSALQAGLRSLQDLGPEMRQALTCDTEEEEEEGQEGVEEEDEKDLETNKATMVSQPSARRGSGISVSLPVGDRLPDSLSFGPSDDDRGTPTSSQPSVPQAGSNTHRRGSGALIFTIPEEGNSQPKGTKGQNKQDEDEEVPDRLSYLDEQAGTPPCSVLLPPHRAQRYMDGHLVPRRRLLPPTPAGRKPSFTIQCLQRQGSCEDLPIPGTYHRGRNSGPNRAQGSWATPPQRGRLLYAPLLLVEEGAAGEGYLGRSSGPLRTFTCLHVPGTHSDPSHGKRGSADSLVEAVLISEGLGLFARDPRFVALAKQEIADACRLTLDEMDNAASDLLAQGTSSLYSDEESILSRFDEEDLGDEMACVHAL</sequence>
<feature type="chain" id="PRO_0000053950" description="Voltage-dependent L-type calcium channel subunit alpha-1F">
    <location>
        <begin position="1"/>
        <end position="1977"/>
    </location>
</feature>
<feature type="topological domain" description="Cytoplasmic" evidence="4">
    <location>
        <begin position="1"/>
        <end position="92"/>
    </location>
</feature>
<feature type="transmembrane region" description="Helical; Name=S1 of repeat I" evidence="4">
    <location>
        <begin position="93"/>
        <end position="111"/>
    </location>
</feature>
<feature type="topological domain" description="Extracellular" evidence="4">
    <location>
        <begin position="112"/>
        <end position="129"/>
    </location>
</feature>
<feature type="transmembrane region" description="Helical; Name=S2 of repeat I" evidence="4">
    <location>
        <begin position="130"/>
        <end position="149"/>
    </location>
</feature>
<feature type="topological domain" description="Cytoplasmic" evidence="4">
    <location>
        <begin position="150"/>
        <end position="161"/>
    </location>
</feature>
<feature type="transmembrane region" description="Helical; Name=S3 of repeat I" evidence="4">
    <location>
        <begin position="162"/>
        <end position="180"/>
    </location>
</feature>
<feature type="topological domain" description="Extracellular" evidence="4">
    <location>
        <begin position="181"/>
        <end position="201"/>
    </location>
</feature>
<feature type="transmembrane region" description="Helical; Name=S4 of repeat I" evidence="4">
    <location>
        <begin position="202"/>
        <end position="220"/>
    </location>
</feature>
<feature type="topological domain" description="Cytoplasmic" evidence="4">
    <location>
        <begin position="221"/>
        <end position="239"/>
    </location>
</feature>
<feature type="transmembrane region" description="Helical; Name=S5 of repeat I" evidence="4">
    <location>
        <begin position="240"/>
        <end position="259"/>
    </location>
</feature>
<feature type="topological domain" description="Extracellular" evidence="4">
    <location>
        <begin position="260"/>
        <end position="347"/>
    </location>
</feature>
<feature type="transmembrane region" description="Helical; Name=S6 of repeat I" evidence="4">
    <location>
        <begin position="348"/>
        <end position="372"/>
    </location>
</feature>
<feature type="topological domain" description="Cytoplasmic" evidence="4">
    <location>
        <begin position="373"/>
        <end position="529"/>
    </location>
</feature>
<feature type="transmembrane region" description="Helical; Name=S1 of repeat II" evidence="4">
    <location>
        <begin position="530"/>
        <end position="549"/>
    </location>
</feature>
<feature type="topological domain" description="Extracellular" evidence="4">
    <location>
        <begin position="550"/>
        <end position="564"/>
    </location>
</feature>
<feature type="transmembrane region" description="Helical; Name=S2 of repeat II" evidence="4">
    <location>
        <begin position="565"/>
        <end position="583"/>
    </location>
</feature>
<feature type="topological domain" description="Cytoplasmic" evidence="4">
    <location>
        <begin position="584"/>
        <end position="591"/>
    </location>
</feature>
<feature type="transmembrane region" description="Helical; Name=S3 of repeat II" evidence="4">
    <location>
        <begin position="592"/>
        <end position="610"/>
    </location>
</feature>
<feature type="topological domain" description="Extracellular" evidence="4">
    <location>
        <begin position="611"/>
        <end position="620"/>
    </location>
</feature>
<feature type="transmembrane region" description="Helical; Name=S4 of repeat II" evidence="4">
    <location>
        <begin position="621"/>
        <end position="639"/>
    </location>
</feature>
<feature type="topological domain" description="Cytoplasmic" evidence="4">
    <location>
        <begin position="640"/>
        <end position="658"/>
    </location>
</feature>
<feature type="transmembrane region" description="Helical; Name=S5 of repeat II" evidence="4">
    <location>
        <begin position="659"/>
        <end position="679"/>
    </location>
</feature>
<feature type="topological domain" description="Extracellular" evidence="4">
    <location>
        <begin position="680"/>
        <end position="733"/>
    </location>
</feature>
<feature type="transmembrane region" description="Helical; Name=S6 of repeat II" evidence="4">
    <location>
        <begin position="734"/>
        <end position="758"/>
    </location>
</feature>
<feature type="topological domain" description="Cytoplasmic" evidence="4">
    <location>
        <begin position="759"/>
        <end position="871"/>
    </location>
</feature>
<feature type="transmembrane region" description="Helical; Name=S1 of repeat III" evidence="4">
    <location>
        <begin position="872"/>
        <end position="890"/>
    </location>
</feature>
<feature type="topological domain" description="Extracellular" evidence="4">
    <location>
        <begin position="891"/>
        <end position="906"/>
    </location>
</feature>
<feature type="transmembrane region" description="Helical; Name=S2 of repeat III" evidence="4">
    <location>
        <begin position="907"/>
        <end position="926"/>
    </location>
</feature>
<feature type="topological domain" description="Cytoplasmic" evidence="4">
    <location>
        <begin position="927"/>
        <end position="938"/>
    </location>
</feature>
<feature type="transmembrane region" description="Helical; Name=S3 of repeat III" evidence="4">
    <location>
        <begin position="939"/>
        <end position="957"/>
    </location>
</feature>
<feature type="topological domain" description="Extracellular" evidence="4">
    <location>
        <begin position="958"/>
        <end position="963"/>
    </location>
</feature>
<feature type="transmembrane region" description="Helical; Name=S4 of repeat III" evidence="4">
    <location>
        <begin position="964"/>
        <end position="983"/>
    </location>
</feature>
<feature type="topological domain" description="Cytoplasmic" evidence="4">
    <location>
        <begin position="984"/>
        <end position="1002"/>
    </location>
</feature>
<feature type="transmembrane region" description="Helical; Name=S5 of repeat III" evidence="4">
    <location>
        <begin position="1003"/>
        <end position="1022"/>
    </location>
</feature>
<feature type="topological domain" description="Extracellular" evidence="4">
    <location>
        <begin position="1023"/>
        <end position="1112"/>
    </location>
</feature>
<feature type="transmembrane region" description="Helical; Name=S6 of repeat III" evidence="4">
    <location>
        <begin position="1113"/>
        <end position="1133"/>
    </location>
</feature>
<feature type="topological domain" description="Cytoplasmic" evidence="4">
    <location>
        <begin position="1134"/>
        <end position="1190"/>
    </location>
</feature>
<feature type="transmembrane region" description="Helical; Name=S1 of repeat IV" evidence="4">
    <location>
        <begin position="1191"/>
        <end position="1209"/>
    </location>
</feature>
<feature type="topological domain" description="Extracellular" evidence="4">
    <location>
        <begin position="1210"/>
        <end position="1224"/>
    </location>
</feature>
<feature type="transmembrane region" description="Helical; Name=S2 of repeat IV" evidence="4">
    <location>
        <begin position="1225"/>
        <end position="1244"/>
    </location>
</feature>
<feature type="topological domain" description="Cytoplasmic" evidence="4">
    <location>
        <begin position="1245"/>
        <end position="1251"/>
    </location>
</feature>
<feature type="transmembrane region" description="Helical; Name=S3 of repeat IV" evidence="4">
    <location>
        <begin position="1252"/>
        <end position="1273"/>
    </location>
</feature>
<feature type="topological domain" description="Extracellular" evidence="4">
    <location>
        <begin position="1274"/>
        <end position="1290"/>
    </location>
</feature>
<feature type="transmembrane region" description="Helical; Name=S4 of repeat IV" evidence="4">
    <location>
        <begin position="1291"/>
        <end position="1310"/>
    </location>
</feature>
<feature type="topological domain" description="Cytoplasmic" evidence="4">
    <location>
        <begin position="1311"/>
        <end position="1329"/>
    </location>
</feature>
<feature type="transmembrane region" description="Helical; Name=S5 of repeat IV" evidence="4">
    <location>
        <begin position="1330"/>
        <end position="1349"/>
    </location>
</feature>
<feature type="topological domain" description="Extracellular" evidence="4">
    <location>
        <begin position="1350"/>
        <end position="1416"/>
    </location>
</feature>
<feature type="transmembrane region" description="Helical; Name=S6 of repeat IV" evidence="4">
    <location>
        <begin position="1417"/>
        <end position="1441"/>
    </location>
</feature>
<feature type="topological domain" description="Cytoplasmic" evidence="4">
    <location>
        <begin position="1442"/>
        <end position="1977"/>
    </location>
</feature>
<feature type="repeat" description="I">
    <location>
        <begin position="79"/>
        <end position="375"/>
    </location>
</feature>
<feature type="repeat" description="II">
    <location>
        <begin position="515"/>
        <end position="761"/>
    </location>
</feature>
<feature type="repeat" description="III">
    <location>
        <begin position="858"/>
        <end position="1140"/>
    </location>
</feature>
<feature type="repeat" description="IV">
    <location>
        <begin position="1177"/>
        <end position="1444"/>
    </location>
</feature>
<feature type="region of interest" description="Disordered" evidence="5">
    <location>
        <begin position="1"/>
        <end position="60"/>
    </location>
</feature>
<feature type="region of interest" description="Binding to the beta subunit" evidence="1">
    <location>
        <begin position="395"/>
        <end position="412"/>
    </location>
</feature>
<feature type="region of interest" description="Disordered" evidence="5">
    <location>
        <begin position="418"/>
        <end position="441"/>
    </location>
</feature>
<feature type="region of interest" description="Disordered" evidence="5">
    <location>
        <begin position="455"/>
        <end position="488"/>
    </location>
</feature>
<feature type="region of interest" description="Disordered" evidence="5">
    <location>
        <begin position="767"/>
        <end position="830"/>
    </location>
</feature>
<feature type="region of interest" description="Dihydropyridine binding" evidence="1">
    <location>
        <begin position="1060"/>
        <end position="1150"/>
    </location>
</feature>
<feature type="region of interest" description="Dihydropyridine binding" evidence="1">
    <location>
        <begin position="1397"/>
        <end position="1463"/>
    </location>
</feature>
<feature type="region of interest" description="Phenylalkylamine binding" evidence="1">
    <location>
        <begin position="1409"/>
        <end position="1452"/>
    </location>
</feature>
<feature type="region of interest" description="Disordered" evidence="5">
    <location>
        <begin position="1637"/>
        <end position="1754"/>
    </location>
</feature>
<feature type="region of interest" description="Disordered" evidence="5">
    <location>
        <begin position="1816"/>
        <end position="1841"/>
    </location>
</feature>
<feature type="compositionally biased region" description="Basic and acidic residues" evidence="5">
    <location>
        <begin position="1"/>
        <end position="11"/>
    </location>
</feature>
<feature type="compositionally biased region" description="Basic residues" evidence="5">
    <location>
        <begin position="48"/>
        <end position="59"/>
    </location>
</feature>
<feature type="compositionally biased region" description="Low complexity" evidence="5">
    <location>
        <begin position="455"/>
        <end position="469"/>
    </location>
</feature>
<feature type="compositionally biased region" description="Basic and acidic residues" evidence="5">
    <location>
        <begin position="768"/>
        <end position="783"/>
    </location>
</feature>
<feature type="compositionally biased region" description="Acidic residues" evidence="5">
    <location>
        <begin position="807"/>
        <end position="826"/>
    </location>
</feature>
<feature type="compositionally biased region" description="Acidic residues" evidence="5">
    <location>
        <begin position="1638"/>
        <end position="1657"/>
    </location>
</feature>
<feature type="compositionally biased region" description="Polar residues" evidence="5">
    <location>
        <begin position="1661"/>
        <end position="1670"/>
    </location>
</feature>
<feature type="compositionally biased region" description="Polar residues" evidence="5">
    <location>
        <begin position="1702"/>
        <end position="1716"/>
    </location>
</feature>
<feature type="compositionally biased region" description="Polar residues" evidence="5">
    <location>
        <begin position="1733"/>
        <end position="1743"/>
    </location>
</feature>
<feature type="compositionally biased region" description="Polar residues" evidence="5">
    <location>
        <begin position="1829"/>
        <end position="1840"/>
    </location>
</feature>
<feature type="binding site" evidence="2">
    <location>
        <position position="330"/>
    </location>
    <ligand>
        <name>Ca(2+)</name>
        <dbReference type="ChEBI" id="CHEBI:29108"/>
    </ligand>
</feature>
<feature type="binding site" evidence="2">
    <location>
        <position position="711"/>
    </location>
    <ligand>
        <name>Ca(2+)</name>
        <dbReference type="ChEBI" id="CHEBI:29108"/>
    </ligand>
</feature>
<feature type="binding site" evidence="2">
    <location>
        <position position="1086"/>
    </location>
    <ligand>
        <name>Ca(2+)</name>
        <dbReference type="ChEBI" id="CHEBI:29108"/>
    </ligand>
</feature>
<feature type="glycosylation site" description="N-linked (GlcNAc...) asparagine" evidence="4">
    <location>
        <position position="295"/>
    </location>
</feature>
<feature type="splice variant" id="VSP_045172" description="In isoform 3." evidence="21">
    <original>DTTPEPSPANGAGPGPEWGLCPGPPAVEGESSGASGLGTPKRRNQHSKHKTVAVASAQRSPRALFCLTLANPLRRSCI</original>
    <variation>GERILPSLQTLGA</variation>
    <location>
        <begin position="9"/>
        <end position="86"/>
    </location>
</feature>
<feature type="splice variant" id="VSP_036785" description="In isoform 2." evidence="18 20">
    <location>
        <begin position="427"/>
        <end position="437"/>
    </location>
</feature>
<feature type="splice variant" id="VSP_058923" description="In isoform 4 and isoform 5." evidence="19">
    <location>
        <begin position="1756"/>
        <end position="1775"/>
    </location>
</feature>
<feature type="splice variant" id="VSP_058924" description="In isoform 4 and isoform 6." evidence="19">
    <location>
        <begin position="1836"/>
        <end position="1901"/>
    </location>
</feature>
<feature type="sequence variant" id="VAR_030807" description="In dbSNP:rs6520408.">
    <original>P</original>
    <variation>L</variation>
    <location>
        <position position="14"/>
    </location>
</feature>
<feature type="sequence variant" id="VAR_030808" description="In CSNB2A." evidence="8">
    <original>C</original>
    <variation>R</variation>
    <location>
        <position position="74"/>
    </location>
</feature>
<feature type="sequence variant" id="VAR_030809" description="In CSNB2A; dbSNP:rs2147924995." evidence="9">
    <original>G</original>
    <variation>R</variation>
    <location>
        <position position="150"/>
    </location>
</feature>
<feature type="sequence variant" id="VAR_030810" description="In CSNB2A." evidence="8">
    <original>S</original>
    <variation>P</variation>
    <location>
        <position position="229"/>
    </location>
</feature>
<feature type="sequence variant" id="VAR_030811" description="In CSNB2A." evidence="8">
    <original>G</original>
    <variation>R</variation>
    <location>
        <position position="261"/>
    </location>
</feature>
<feature type="sequence variant" id="VAR_001504" description="In CSNB2A; dbSNP:rs122456133." evidence="7 8 16">
    <original>G</original>
    <variation>D</variation>
    <location>
        <position position="369"/>
    </location>
</feature>
<feature type="sequence variant" id="VAR_001505" description="In CSNB2A; likely benign; dbSNP:rs34162630." evidence="16">
    <original>R</original>
    <variation>Q</variation>
    <location>
        <position position="519"/>
    </location>
</feature>
<feature type="sequence variant" id="VAR_071433" description="In AIED and CSNB2A; dbSNP:rs201654095." evidence="14">
    <original>G</original>
    <variation>R</variation>
    <location>
        <position position="603"/>
    </location>
</feature>
<feature type="sequence variant" id="VAR_030812" description="In CSNB2A; uncertain significance; dbSNP:rs141010716." evidence="9">
    <original>V</original>
    <variation>I</variation>
    <location>
        <position position="635"/>
    </location>
</feature>
<feature type="sequence variant" id="VAR_030813" description="In CSNB2A." evidence="7">
    <original>G</original>
    <variation>D</variation>
    <location>
        <position position="674"/>
    </location>
</feature>
<feature type="sequence variant" id="VAR_029376" description="In dbSNP:rs141159097." evidence="12">
    <original>N</original>
    <variation>T</variation>
    <location>
        <position position="746"/>
    </location>
</feature>
<feature type="sequence variant" id="VAR_030814" description="In CSNB2A; dbSNP:rs1602644716." evidence="8">
    <original>F</original>
    <variation>C</variation>
    <location>
        <position position="753"/>
    </location>
</feature>
<feature type="sequence variant" id="VAR_030815" description="In CSNB2A; increases the number of mutant channels open at physiologic membrane potential and allows for persistent Ca(2+) entry due to reduced channel inactivation resulting in a gain-of-function defect; dbSNP:rs122456136." evidence="10">
    <original>I</original>
    <variation>T</variation>
    <location>
        <position position="756"/>
    </location>
</feature>
<feature type="sequence variant" id="VAR_030816" description="In CSNB2A." evidence="8">
    <original>L</original>
    <variation>P</variation>
    <location>
        <position position="860"/>
    </location>
</feature>
<feature type="sequence variant" id="VAR_030817" description="In CSNB2A; dbSNP:rs2065743582." evidence="7">
    <original>A</original>
    <variation>D</variation>
    <location>
        <position position="928"/>
    </location>
</feature>
<feature type="sequence variant" id="VAR_030818" description="In CSNB2A; dbSNP:rs1249437161." evidence="8">
    <original>G</original>
    <variation>R</variation>
    <location>
        <position position="1018"/>
    </location>
</feature>
<feature type="sequence variant" id="VAR_001506" description="In CSNB2A; dbSNP:rs2147904860." evidence="8 16">
    <original>R</original>
    <variation>W</variation>
    <location>
        <position position="1060"/>
    </location>
</feature>
<feature type="sequence variant" id="VAR_030819" description="In CSNB2A." evidence="8">
    <original>L</original>
    <variation>P</variation>
    <location>
        <position position="1079"/>
    </location>
</feature>
<feature type="sequence variant" id="VAR_055662" description="In dbSNP:rs34308720.">
    <original>A</original>
    <variation>T</variation>
    <location>
        <position position="1259"/>
    </location>
</feature>
<feature type="sequence variant" id="VAR_031822" description="In dbSNP:rs34308720.">
    <original>A</original>
    <variation>T</variation>
    <location>
        <position position="1270"/>
    </location>
</feature>
<feature type="sequence variant" id="VAR_001507" description="In CSNB2A." evidence="16">
    <original>L</original>
    <variation>H</variation>
    <location>
        <position position="1375"/>
    </location>
</feature>
<feature type="sequence variant" id="VAR_030820" description="In CSNB2A; dbSNP:rs2147896131." evidence="8">
    <original>C</original>
    <variation>R</variation>
    <location>
        <position position="1499"/>
    </location>
</feature>
<feature type="sequence variant" id="VAR_030821" description="In CSNB2A." evidence="8">
    <original>P</original>
    <variation>R</variation>
    <location>
        <position position="1500"/>
    </location>
</feature>
<feature type="sequence variant" id="VAR_030822" description="In CSNB2A; dbSNP:rs2065644808." evidence="8">
    <original>L</original>
    <variation>P</variation>
    <location>
        <position position="1508"/>
    </location>
</feature>
<feature type="sequence variant" id="VAR_054818" description="In dbSNP:rs33910054.">
    <original>R</original>
    <variation>H</variation>
    <location>
        <position position="1930"/>
    </location>
</feature>
<feature type="sequence conflict" description="In Ref. 6; AAB92359." evidence="22" ref="6">
    <original>E</original>
    <variation>V</variation>
    <location>
        <position position="1236"/>
    </location>
</feature>
<feature type="sequence conflict" description="In Ref. 6; AAB92359." evidence="22" ref="6">
    <original>A</original>
    <variation>G</variation>
    <location>
        <position position="1860"/>
    </location>
</feature>
<organism>
    <name type="scientific">Homo sapiens</name>
    <name type="common">Human</name>
    <dbReference type="NCBI Taxonomy" id="9606"/>
    <lineage>
        <taxon>Eukaryota</taxon>
        <taxon>Metazoa</taxon>
        <taxon>Chordata</taxon>
        <taxon>Craniata</taxon>
        <taxon>Vertebrata</taxon>
        <taxon>Euteleostomi</taxon>
        <taxon>Mammalia</taxon>
        <taxon>Eutheria</taxon>
        <taxon>Euarchontoglires</taxon>
        <taxon>Primates</taxon>
        <taxon>Haplorrhini</taxon>
        <taxon>Catarrhini</taxon>
        <taxon>Hominidae</taxon>
        <taxon>Homo</taxon>
    </lineage>
</organism>
<dbReference type="EMBL" id="AJ006216">
    <property type="protein sequence ID" value="CAA06916.1"/>
    <property type="molecule type" value="Genomic_DNA"/>
</dbReference>
<dbReference type="EMBL" id="AF067227">
    <property type="protein sequence ID" value="AAD03587.1"/>
    <property type="molecule type" value="mRNA"/>
</dbReference>
<dbReference type="EMBL" id="AJ224874">
    <property type="protein sequence ID" value="CAA12175.1"/>
    <property type="molecule type" value="mRNA"/>
</dbReference>
<dbReference type="EMBL" id="AF201304">
    <property type="protein sequence ID" value="AAF15290.1"/>
    <property type="molecule type" value="mRNA"/>
</dbReference>
<dbReference type="EMBL" id="JF701915">
    <property type="protein sequence ID" value="AED89557.1"/>
    <property type="molecule type" value="mRNA"/>
</dbReference>
<dbReference type="EMBL" id="AF196779">
    <property type="status" value="NOT_ANNOTATED_CDS"/>
    <property type="molecule type" value="Genomic_DNA"/>
</dbReference>
<dbReference type="EMBL" id="AF235097">
    <property type="status" value="NOT_ANNOTATED_CDS"/>
    <property type="molecule type" value="Genomic_DNA"/>
</dbReference>
<dbReference type="EMBL" id="U93305">
    <property type="protein sequence ID" value="AAB92359.1"/>
    <property type="status" value="ALT_SEQ"/>
    <property type="molecule type" value="Genomic_DNA"/>
</dbReference>
<dbReference type="CCDS" id="CCDS35253.1">
    <molecule id="O60840-1"/>
</dbReference>
<dbReference type="CCDS" id="CCDS59166.1">
    <molecule id="O60840-4"/>
</dbReference>
<dbReference type="CCDS" id="CCDS59167.1">
    <molecule id="O60840-2"/>
</dbReference>
<dbReference type="RefSeq" id="NP_001243718.1">
    <molecule id="O60840-2"/>
    <property type="nucleotide sequence ID" value="NM_001256789.3"/>
</dbReference>
<dbReference type="RefSeq" id="NP_001243719.1">
    <molecule id="O60840-4"/>
    <property type="nucleotide sequence ID" value="NM_001256790.3"/>
</dbReference>
<dbReference type="RefSeq" id="NP_005174.2">
    <molecule id="O60840-1"/>
    <property type="nucleotide sequence ID" value="NM_005183.4"/>
</dbReference>
<dbReference type="SMR" id="O60840"/>
<dbReference type="BioGRID" id="107232">
    <property type="interactions" value="4"/>
</dbReference>
<dbReference type="FunCoup" id="O60840">
    <property type="interactions" value="1147"/>
</dbReference>
<dbReference type="IntAct" id="O60840">
    <property type="interactions" value="3"/>
</dbReference>
<dbReference type="STRING" id="9606.ENSP00000365441"/>
<dbReference type="BindingDB" id="O60840"/>
<dbReference type="ChEMBL" id="CHEMBL2363032"/>
<dbReference type="DrugBank" id="DB01118">
    <property type="generic name" value="Amiodarone"/>
</dbReference>
<dbReference type="DrugBank" id="DB09229">
    <property type="generic name" value="Aranidipine"/>
</dbReference>
<dbReference type="DrugBank" id="DB09231">
    <property type="generic name" value="Benidipine"/>
</dbReference>
<dbReference type="DrugBank" id="DB13746">
    <property type="generic name" value="Bioallethrin"/>
</dbReference>
<dbReference type="DrugBank" id="DB11148">
    <property type="generic name" value="Butamben"/>
</dbReference>
<dbReference type="DrugBank" id="DB11093">
    <property type="generic name" value="Calcium citrate"/>
</dbReference>
<dbReference type="DrugBank" id="DB11348">
    <property type="generic name" value="Calcium Phosphate"/>
</dbReference>
<dbReference type="DrugBank" id="DB14481">
    <property type="generic name" value="Calcium phosphate dihydrate"/>
</dbReference>
<dbReference type="DrugBank" id="DB09232">
    <property type="generic name" value="Cilnidipine"/>
</dbReference>
<dbReference type="DrugBank" id="DB00568">
    <property type="generic name" value="Cinnarizine"/>
</dbReference>
<dbReference type="DrugBank" id="DB04920">
    <property type="generic name" value="Clevidipine"/>
</dbReference>
<dbReference type="DrugBank" id="DB04855">
    <property type="generic name" value="Dronedarone"/>
</dbReference>
<dbReference type="DrugBank" id="DB06751">
    <property type="generic name" value="Drotaverine"/>
</dbReference>
<dbReference type="DrugBank" id="DB09235">
    <property type="generic name" value="Efonidipine"/>
</dbReference>
<dbReference type="DrugBank" id="DB00228">
    <property type="generic name" value="Enflurane"/>
</dbReference>
<dbReference type="DrugBank" id="DB00153">
    <property type="generic name" value="Ergocalciferol"/>
</dbReference>
<dbReference type="DrugBank" id="DB13961">
    <property type="generic name" value="Fish oil"/>
</dbReference>
<dbReference type="DrugBank" id="DB09236">
    <property type="generic name" value="Lacidipine"/>
</dbReference>
<dbReference type="DrugBank" id="DB00825">
    <property type="generic name" value="Levomenthol"/>
</dbReference>
<dbReference type="DrugBank" id="DB00653">
    <property type="generic name" value="Magnesium sulfate"/>
</dbReference>
<dbReference type="DrugBank" id="DB09238">
    <property type="generic name" value="Manidipine"/>
</dbReference>
<dbReference type="DrugBank" id="DB01388">
    <property type="generic name" value="Mibefradil"/>
</dbReference>
<dbReference type="DrugBank" id="DB01110">
    <property type="generic name" value="Miconazole"/>
</dbReference>
<dbReference type="DrugBank" id="DB00622">
    <property type="generic name" value="Nicardipine"/>
</dbReference>
<dbReference type="DrugBank" id="DB06712">
    <property type="generic name" value="Nilvadipine"/>
</dbReference>
<dbReference type="DrugBank" id="DB00393">
    <property type="generic name" value="Nimodipine"/>
</dbReference>
<dbReference type="DrugBank" id="DB01054">
    <property type="generic name" value="Nitrendipine"/>
</dbReference>
<dbReference type="DrugBank" id="DB00252">
    <property type="generic name" value="Phenytoin"/>
</dbReference>
<dbReference type="DrugBank" id="DB00243">
    <property type="generic name" value="Ranolazine"/>
</dbReference>
<dbReference type="DrugBank" id="DB00421">
    <property type="generic name" value="Spironolactone"/>
</dbReference>
<dbReference type="DrugBank" id="DB00273">
    <property type="generic name" value="Topiramate"/>
</dbReference>
<dbReference type="DrugBank" id="DB09089">
    <property type="generic name" value="Trimebutine"/>
</dbReference>
<dbReference type="DrugBank" id="DB00661">
    <property type="generic name" value="Verapamil"/>
</dbReference>
<dbReference type="DrugCentral" id="O60840"/>
<dbReference type="GuidetoPHARMACOLOGY" id="531"/>
<dbReference type="TCDB" id="1.A.1.11.11">
    <property type="family name" value="the voltage-gated ion channel (vic) superfamily"/>
</dbReference>
<dbReference type="GlyCosmos" id="O60840">
    <property type="glycosylation" value="1 site, No reported glycans"/>
</dbReference>
<dbReference type="GlyGen" id="O60840">
    <property type="glycosylation" value="3 sites"/>
</dbReference>
<dbReference type="iPTMnet" id="O60840"/>
<dbReference type="PhosphoSitePlus" id="O60840"/>
<dbReference type="BioMuta" id="CACNA1F"/>
<dbReference type="jPOST" id="O60840"/>
<dbReference type="MassIVE" id="O60840"/>
<dbReference type="PaxDb" id="9606-ENSP00000365441"/>
<dbReference type="PeptideAtlas" id="O60840"/>
<dbReference type="ProteomicsDB" id="49626">
    <molecule id="O60840-1"/>
</dbReference>
<dbReference type="ProteomicsDB" id="49627">
    <molecule id="O60840-2"/>
</dbReference>
<dbReference type="ProteomicsDB" id="50727"/>
<dbReference type="Antibodypedia" id="26145">
    <property type="antibodies" value="104 antibodies from 18 providers"/>
</dbReference>
<dbReference type="DNASU" id="778"/>
<dbReference type="Ensembl" id="ENST00000323022.10">
    <molecule id="O60840-2"/>
    <property type="protein sequence ID" value="ENSP00000321618.6"/>
    <property type="gene ID" value="ENSG00000102001.13"/>
</dbReference>
<dbReference type="Ensembl" id="ENST00000376251.5">
    <molecule id="O60840-4"/>
    <property type="protein sequence ID" value="ENSP00000365427.1"/>
    <property type="gene ID" value="ENSG00000102001.13"/>
</dbReference>
<dbReference type="Ensembl" id="ENST00000376265.2">
    <molecule id="O60840-1"/>
    <property type="protein sequence ID" value="ENSP00000365441.2"/>
    <property type="gene ID" value="ENSG00000102001.13"/>
</dbReference>
<dbReference type="GeneID" id="778"/>
<dbReference type="KEGG" id="hsa:778"/>
<dbReference type="MANE-Select" id="ENST00000323022.10">
    <molecule id="O60840-2"/>
    <property type="protein sequence ID" value="ENSP00000321618.6"/>
    <property type="RefSeq nucleotide sequence ID" value="NM_001256789.3"/>
    <property type="RefSeq protein sequence ID" value="NP_001243718.1"/>
</dbReference>
<dbReference type="UCSC" id="uc004dnb.3">
    <molecule id="O60840-1"/>
    <property type="organism name" value="human"/>
</dbReference>
<dbReference type="AGR" id="HGNC:1393"/>
<dbReference type="CTD" id="778"/>
<dbReference type="DisGeNET" id="778"/>
<dbReference type="GeneCards" id="CACNA1F"/>
<dbReference type="GeneReviews" id="CACNA1F"/>
<dbReference type="HGNC" id="HGNC:1393">
    <property type="gene designation" value="CACNA1F"/>
</dbReference>
<dbReference type="HPA" id="ENSG00000102001">
    <property type="expression patterns" value="Tissue enriched (retina)"/>
</dbReference>
<dbReference type="MalaCards" id="CACNA1F"/>
<dbReference type="MIM" id="300071">
    <property type="type" value="phenotype"/>
</dbReference>
<dbReference type="MIM" id="300110">
    <property type="type" value="gene"/>
</dbReference>
<dbReference type="MIM" id="300476">
    <property type="type" value="phenotype"/>
</dbReference>
<dbReference type="MIM" id="300600">
    <property type="type" value="phenotype"/>
</dbReference>
<dbReference type="neXtProt" id="NX_O60840"/>
<dbReference type="OpenTargets" id="ENSG00000102001"/>
<dbReference type="Orphanet" id="178333">
    <property type="disease" value="Aaland Islands eye disease"/>
</dbReference>
<dbReference type="Orphanet" id="1872">
    <property type="disease" value="Cone rod dystrophy"/>
</dbReference>
<dbReference type="Orphanet" id="215">
    <property type="disease" value="Congenital stationary night blindness"/>
</dbReference>
<dbReference type="PharmGKB" id="PA26010"/>
<dbReference type="VEuPathDB" id="HostDB:ENSG00000102001"/>
<dbReference type="eggNOG" id="KOG2301">
    <property type="taxonomic scope" value="Eukaryota"/>
</dbReference>
<dbReference type="GeneTree" id="ENSGT00940000159855"/>
<dbReference type="HOGENOM" id="CLU_000540_0_1_1"/>
<dbReference type="InParanoid" id="O60840"/>
<dbReference type="OMA" id="DEMACIH"/>
<dbReference type="OrthoDB" id="431720at2759"/>
<dbReference type="PAN-GO" id="O60840">
    <property type="GO annotations" value="3 GO annotations based on evolutionary models"/>
</dbReference>
<dbReference type="PhylomeDB" id="O60840"/>
<dbReference type="TreeFam" id="TF312805"/>
<dbReference type="PathwayCommons" id="O60840"/>
<dbReference type="SignaLink" id="O60840"/>
<dbReference type="BioGRID-ORCS" id="778">
    <property type="hits" value="5 hits in 776 CRISPR screens"/>
</dbReference>
<dbReference type="ChiTaRS" id="CACNA1F">
    <property type="organism name" value="human"/>
</dbReference>
<dbReference type="GeneWiki" id="Cav1.4"/>
<dbReference type="GenomeRNAi" id="778"/>
<dbReference type="Pharos" id="O60840">
    <property type="development level" value="Tchem"/>
</dbReference>
<dbReference type="PRO" id="PR:O60840"/>
<dbReference type="Proteomes" id="UP000005640">
    <property type="component" value="Chromosome X"/>
</dbReference>
<dbReference type="RNAct" id="O60840">
    <property type="molecule type" value="protein"/>
</dbReference>
<dbReference type="Bgee" id="ENSG00000102001">
    <property type="expression patterns" value="Expressed in granulocyte and 89 other cell types or tissues"/>
</dbReference>
<dbReference type="ExpressionAtlas" id="O60840">
    <property type="expression patterns" value="baseline and differential"/>
</dbReference>
<dbReference type="GO" id="GO:0016020">
    <property type="term" value="C:membrane"/>
    <property type="evidence" value="ECO:0000314"/>
    <property type="project" value="UniProtKB"/>
</dbReference>
<dbReference type="GO" id="GO:0043204">
    <property type="term" value="C:perikaryon"/>
    <property type="evidence" value="ECO:0007669"/>
    <property type="project" value="Ensembl"/>
</dbReference>
<dbReference type="GO" id="GO:0001750">
    <property type="term" value="C:photoreceptor outer segment"/>
    <property type="evidence" value="ECO:0007669"/>
    <property type="project" value="Ensembl"/>
</dbReference>
<dbReference type="GO" id="GO:0005891">
    <property type="term" value="C:voltage-gated calcium channel complex"/>
    <property type="evidence" value="ECO:0000314"/>
    <property type="project" value="UniProtKB"/>
</dbReference>
<dbReference type="GO" id="GO:0008331">
    <property type="term" value="F:high voltage-gated calcium channel activity"/>
    <property type="evidence" value="ECO:0000314"/>
    <property type="project" value="UniProtKB"/>
</dbReference>
<dbReference type="GO" id="GO:0046872">
    <property type="term" value="F:metal ion binding"/>
    <property type="evidence" value="ECO:0007669"/>
    <property type="project" value="UniProtKB-KW"/>
</dbReference>
<dbReference type="GO" id="GO:0005245">
    <property type="term" value="F:voltage-gated calcium channel activity"/>
    <property type="evidence" value="ECO:0000314"/>
    <property type="project" value="UniProtKB"/>
</dbReference>
<dbReference type="GO" id="GO:0098703">
    <property type="term" value="P:calcium ion import across plasma membrane"/>
    <property type="evidence" value="ECO:0000318"/>
    <property type="project" value="GO_Central"/>
</dbReference>
<dbReference type="GO" id="GO:0050908">
    <property type="term" value="P:detection of light stimulus involved in visual perception"/>
    <property type="evidence" value="ECO:0000315"/>
    <property type="project" value="UniProtKB"/>
</dbReference>
<dbReference type="GO" id="GO:1901386">
    <property type="term" value="P:negative regulation of voltage-gated calcium channel activity"/>
    <property type="evidence" value="ECO:0000314"/>
    <property type="project" value="UniProtKB"/>
</dbReference>
<dbReference type="GO" id="GO:0007601">
    <property type="term" value="P:visual perception"/>
    <property type="evidence" value="ECO:0000315"/>
    <property type="project" value="UniProtKB"/>
</dbReference>
<dbReference type="FunFam" id="1.10.287.70:FF:000009">
    <property type="entry name" value="Voltage-dependent L-type calcium channel subunit alpha"/>
    <property type="match status" value="1"/>
</dbReference>
<dbReference type="FunFam" id="1.10.287.70:FF:000148">
    <property type="entry name" value="Voltage-dependent L-type calcium channel subunit alpha"/>
    <property type="match status" value="1"/>
</dbReference>
<dbReference type="FunFam" id="1.20.120.350:FF:000001">
    <property type="entry name" value="Voltage-dependent L-type calcium channel subunit alpha"/>
    <property type="match status" value="1"/>
</dbReference>
<dbReference type="FunFam" id="1.20.120.350:FF:000006">
    <property type="entry name" value="Voltage-dependent L-type calcium channel subunit alpha"/>
    <property type="match status" value="1"/>
</dbReference>
<dbReference type="FunFam" id="1.20.120.350:FF:000010">
    <property type="entry name" value="Voltage-dependent L-type calcium channel subunit alpha"/>
    <property type="match status" value="1"/>
</dbReference>
<dbReference type="FunFam" id="1.20.120.350:FF:000020">
    <property type="entry name" value="Voltage-dependent L-type calcium channel subunit alpha"/>
    <property type="match status" value="1"/>
</dbReference>
<dbReference type="FunFam" id="1.10.238.10:FF:000063">
    <property type="entry name" value="Voltage-dependent N-type calcium channel subunit alpha"/>
    <property type="match status" value="1"/>
</dbReference>
<dbReference type="Gene3D" id="1.10.287.70">
    <property type="match status" value="4"/>
</dbReference>
<dbReference type="Gene3D" id="6.10.250.2180">
    <property type="match status" value="1"/>
</dbReference>
<dbReference type="Gene3D" id="6.10.250.2500">
    <property type="match status" value="1"/>
</dbReference>
<dbReference type="Gene3D" id="1.20.120.350">
    <property type="entry name" value="Voltage-gated potassium channels. Chain C"/>
    <property type="match status" value="4"/>
</dbReference>
<dbReference type="InterPro" id="IPR031688">
    <property type="entry name" value="CAC1F_C"/>
</dbReference>
<dbReference type="InterPro" id="IPR031649">
    <property type="entry name" value="GPHH_dom"/>
</dbReference>
<dbReference type="InterPro" id="IPR005821">
    <property type="entry name" value="Ion_trans_dom"/>
</dbReference>
<dbReference type="InterPro" id="IPR014873">
    <property type="entry name" value="VDCC_a1su_IQ"/>
</dbReference>
<dbReference type="InterPro" id="IPR050599">
    <property type="entry name" value="VDCC_alpha-1_subunit"/>
</dbReference>
<dbReference type="InterPro" id="IPR005446">
    <property type="entry name" value="VDCC_L_a1su"/>
</dbReference>
<dbReference type="InterPro" id="IPR002077">
    <property type="entry name" value="VDCCAlpha1"/>
</dbReference>
<dbReference type="InterPro" id="IPR027359">
    <property type="entry name" value="Volt_channel_dom_sf"/>
</dbReference>
<dbReference type="PANTHER" id="PTHR45628">
    <property type="entry name" value="VOLTAGE-DEPENDENT CALCIUM CHANNEL TYPE A SUBUNIT ALPHA-1"/>
    <property type="match status" value="1"/>
</dbReference>
<dbReference type="PANTHER" id="PTHR45628:SF2">
    <property type="entry name" value="VOLTAGE-DEPENDENT L-TYPE CALCIUM CHANNEL SUBUNIT ALPHA-1F"/>
    <property type="match status" value="1"/>
</dbReference>
<dbReference type="Pfam" id="PF08763">
    <property type="entry name" value="Ca_chan_IQ"/>
    <property type="match status" value="1"/>
</dbReference>
<dbReference type="Pfam" id="PF16885">
    <property type="entry name" value="CAC1F_C"/>
    <property type="match status" value="1"/>
</dbReference>
<dbReference type="Pfam" id="PF16905">
    <property type="entry name" value="GPHH"/>
    <property type="match status" value="1"/>
</dbReference>
<dbReference type="Pfam" id="PF00520">
    <property type="entry name" value="Ion_trans"/>
    <property type="match status" value="4"/>
</dbReference>
<dbReference type="PRINTS" id="PR00167">
    <property type="entry name" value="CACHANNEL"/>
</dbReference>
<dbReference type="PRINTS" id="PR01630">
    <property type="entry name" value="LVDCCALPHA1"/>
</dbReference>
<dbReference type="SMART" id="SM01062">
    <property type="entry name" value="Ca_chan_IQ"/>
    <property type="match status" value="1"/>
</dbReference>
<dbReference type="SUPFAM" id="SSF81324">
    <property type="entry name" value="Voltage-gated potassium channels"/>
    <property type="match status" value="4"/>
</dbReference>
<reference key="1">
    <citation type="journal article" date="1998" name="Nat. Genet.">
        <title>An L-type calcium-channel gene mutated in incomplete X-linked congenital stationary night blindness.</title>
        <authorList>
            <person name="Strom T.M."/>
            <person name="Nyakatura G."/>
            <person name="Apfelstedt-Sylla E."/>
            <person name="Hellebrand H."/>
            <person name="Lorenz B."/>
            <person name="Weber B.H.F."/>
            <person name="Wutz K."/>
            <person name="Gutwillinger N."/>
            <person name="Ruether K."/>
            <person name="Drescher B."/>
            <person name="Sauer C."/>
            <person name="Zrenner E."/>
            <person name="Meitinger T."/>
            <person name="Rosenthal A."/>
            <person name="Meindl A."/>
        </authorList>
    </citation>
    <scope>NUCLEOTIDE SEQUENCE [GENOMIC DNA / MRNA] (ISOFORM 2)</scope>
    <scope>VARIANTS CSNB2A ASP-369; GLN-519; TRP-1060 AND HIS-1375</scope>
    <source>
        <tissue>Retina</tissue>
    </source>
</reference>
<reference key="2">
    <citation type="journal article" date="1998" name="Nat. Genet.">
        <title>Loss-of-function mutations in a calcium-channel alpha1-subunit gene in Xp11.23 cause incomplete X-linked congenital stationary night blindness.</title>
        <authorList>
            <person name="Bech-Hansen N.T."/>
            <person name="Naylor M.J."/>
            <person name="Maybaum T.A."/>
            <person name="Pearce W.G."/>
            <person name="Koop B."/>
            <person name="Fishman G.A."/>
            <person name="Mets M."/>
            <person name="Musarella M.A."/>
            <person name="Boycott K.M."/>
        </authorList>
    </citation>
    <scope>NUCLEOTIDE SEQUENCE [MRNA] (ISOFORM 3)</scope>
    <scope>INVOLVEMENT IN CSNB2A</scope>
</reference>
<reference key="3">
    <citation type="journal article" date="2000" name="Genomics">
        <title>Isolation and characterization of a calcium channel gene, cacna1f, the murine orthologue of the gene for incomplete X-linked congenital stationary night blindness.</title>
        <authorList>
            <person name="Naylor M.J."/>
            <person name="Rancourt D.E."/>
            <person name="Bech-Hansen N.T."/>
        </authorList>
    </citation>
    <scope>NUCLEOTIDE SEQUENCE [MRNA] (ISOFORM 1)</scope>
    <scope>TISSUE SPECIFICITY</scope>
</reference>
<reference key="4">
    <citation type="journal article" date="2009" name="Mol. Pharmacol.">
        <title>Expression and 1,4-dihydropyridine-binding properties of brain L-type calcium channel isoforms.</title>
        <authorList>
            <person name="Sinnegger-Brauns M.J."/>
            <person name="Huber I.G."/>
            <person name="Koschak A."/>
            <person name="Wild C."/>
            <person name="Obermair G.J."/>
            <person name="Einzinger U."/>
            <person name="Hoda J.C."/>
            <person name="Sartori S.B."/>
            <person name="Striessnig J."/>
        </authorList>
    </citation>
    <scope>NUCLEOTIDE SEQUENCE [MRNA] (ISOFORM 2)</scope>
    <source>
        <tissue>Retina</tissue>
    </source>
</reference>
<reference key="5">
    <citation type="journal article" date="2005" name="Nature">
        <title>The DNA sequence of the human X chromosome.</title>
        <authorList>
            <person name="Ross M.T."/>
            <person name="Grafham D.V."/>
            <person name="Coffey A.J."/>
            <person name="Scherer S."/>
            <person name="McLay K."/>
            <person name="Muzny D."/>
            <person name="Platzer M."/>
            <person name="Howell G.R."/>
            <person name="Burrows C."/>
            <person name="Bird C.P."/>
            <person name="Frankish A."/>
            <person name="Lovell F.L."/>
            <person name="Howe K.L."/>
            <person name="Ashurst J.L."/>
            <person name="Fulton R.S."/>
            <person name="Sudbrak R."/>
            <person name="Wen G."/>
            <person name="Jones M.C."/>
            <person name="Hurles M.E."/>
            <person name="Andrews T.D."/>
            <person name="Scott C.E."/>
            <person name="Searle S."/>
            <person name="Ramser J."/>
            <person name="Whittaker A."/>
            <person name="Deadman R."/>
            <person name="Carter N.P."/>
            <person name="Hunt S.E."/>
            <person name="Chen R."/>
            <person name="Cree A."/>
            <person name="Gunaratne P."/>
            <person name="Havlak P."/>
            <person name="Hodgson A."/>
            <person name="Metzker M.L."/>
            <person name="Richards S."/>
            <person name="Scott G."/>
            <person name="Steffen D."/>
            <person name="Sodergren E."/>
            <person name="Wheeler D.A."/>
            <person name="Worley K.C."/>
            <person name="Ainscough R."/>
            <person name="Ambrose K.D."/>
            <person name="Ansari-Lari M.A."/>
            <person name="Aradhya S."/>
            <person name="Ashwell R.I."/>
            <person name="Babbage A.K."/>
            <person name="Bagguley C.L."/>
            <person name="Ballabio A."/>
            <person name="Banerjee R."/>
            <person name="Barker G.E."/>
            <person name="Barlow K.F."/>
            <person name="Barrett I.P."/>
            <person name="Bates K.N."/>
            <person name="Beare D.M."/>
            <person name="Beasley H."/>
            <person name="Beasley O."/>
            <person name="Beck A."/>
            <person name="Bethel G."/>
            <person name="Blechschmidt K."/>
            <person name="Brady N."/>
            <person name="Bray-Allen S."/>
            <person name="Bridgeman A.M."/>
            <person name="Brown A.J."/>
            <person name="Brown M.J."/>
            <person name="Bonnin D."/>
            <person name="Bruford E.A."/>
            <person name="Buhay C."/>
            <person name="Burch P."/>
            <person name="Burford D."/>
            <person name="Burgess J."/>
            <person name="Burrill W."/>
            <person name="Burton J."/>
            <person name="Bye J.M."/>
            <person name="Carder C."/>
            <person name="Carrel L."/>
            <person name="Chako J."/>
            <person name="Chapman J.C."/>
            <person name="Chavez D."/>
            <person name="Chen E."/>
            <person name="Chen G."/>
            <person name="Chen Y."/>
            <person name="Chen Z."/>
            <person name="Chinault C."/>
            <person name="Ciccodicola A."/>
            <person name="Clark S.Y."/>
            <person name="Clarke G."/>
            <person name="Clee C.M."/>
            <person name="Clegg S."/>
            <person name="Clerc-Blankenburg K."/>
            <person name="Clifford K."/>
            <person name="Cobley V."/>
            <person name="Cole C.G."/>
            <person name="Conquer J.S."/>
            <person name="Corby N."/>
            <person name="Connor R.E."/>
            <person name="David R."/>
            <person name="Davies J."/>
            <person name="Davis C."/>
            <person name="Davis J."/>
            <person name="Delgado O."/>
            <person name="Deshazo D."/>
            <person name="Dhami P."/>
            <person name="Ding Y."/>
            <person name="Dinh H."/>
            <person name="Dodsworth S."/>
            <person name="Draper H."/>
            <person name="Dugan-Rocha S."/>
            <person name="Dunham A."/>
            <person name="Dunn M."/>
            <person name="Durbin K.J."/>
            <person name="Dutta I."/>
            <person name="Eades T."/>
            <person name="Ellwood M."/>
            <person name="Emery-Cohen A."/>
            <person name="Errington H."/>
            <person name="Evans K.L."/>
            <person name="Faulkner L."/>
            <person name="Francis F."/>
            <person name="Frankland J."/>
            <person name="Fraser A.E."/>
            <person name="Galgoczy P."/>
            <person name="Gilbert J."/>
            <person name="Gill R."/>
            <person name="Gloeckner G."/>
            <person name="Gregory S.G."/>
            <person name="Gribble S."/>
            <person name="Griffiths C."/>
            <person name="Grocock R."/>
            <person name="Gu Y."/>
            <person name="Gwilliam R."/>
            <person name="Hamilton C."/>
            <person name="Hart E.A."/>
            <person name="Hawes A."/>
            <person name="Heath P.D."/>
            <person name="Heitmann K."/>
            <person name="Hennig S."/>
            <person name="Hernandez J."/>
            <person name="Hinzmann B."/>
            <person name="Ho S."/>
            <person name="Hoffs M."/>
            <person name="Howden P.J."/>
            <person name="Huckle E.J."/>
            <person name="Hume J."/>
            <person name="Hunt P.J."/>
            <person name="Hunt A.R."/>
            <person name="Isherwood J."/>
            <person name="Jacob L."/>
            <person name="Johnson D."/>
            <person name="Jones S."/>
            <person name="de Jong P.J."/>
            <person name="Joseph S.S."/>
            <person name="Keenan S."/>
            <person name="Kelly S."/>
            <person name="Kershaw J.K."/>
            <person name="Khan Z."/>
            <person name="Kioschis P."/>
            <person name="Klages S."/>
            <person name="Knights A.J."/>
            <person name="Kosiura A."/>
            <person name="Kovar-Smith C."/>
            <person name="Laird G.K."/>
            <person name="Langford C."/>
            <person name="Lawlor S."/>
            <person name="Leversha M."/>
            <person name="Lewis L."/>
            <person name="Liu W."/>
            <person name="Lloyd C."/>
            <person name="Lloyd D.M."/>
            <person name="Loulseged H."/>
            <person name="Loveland J.E."/>
            <person name="Lovell J.D."/>
            <person name="Lozado R."/>
            <person name="Lu J."/>
            <person name="Lyne R."/>
            <person name="Ma J."/>
            <person name="Maheshwari M."/>
            <person name="Matthews L.H."/>
            <person name="McDowall J."/>
            <person name="McLaren S."/>
            <person name="McMurray A."/>
            <person name="Meidl P."/>
            <person name="Meitinger T."/>
            <person name="Milne S."/>
            <person name="Miner G."/>
            <person name="Mistry S.L."/>
            <person name="Morgan M."/>
            <person name="Morris S."/>
            <person name="Mueller I."/>
            <person name="Mullikin J.C."/>
            <person name="Nguyen N."/>
            <person name="Nordsiek G."/>
            <person name="Nyakatura G."/>
            <person name="O'dell C.N."/>
            <person name="Okwuonu G."/>
            <person name="Palmer S."/>
            <person name="Pandian R."/>
            <person name="Parker D."/>
            <person name="Parrish J."/>
            <person name="Pasternak S."/>
            <person name="Patel D."/>
            <person name="Pearce A.V."/>
            <person name="Pearson D.M."/>
            <person name="Pelan S.E."/>
            <person name="Perez L."/>
            <person name="Porter K.M."/>
            <person name="Ramsey Y."/>
            <person name="Reichwald K."/>
            <person name="Rhodes S."/>
            <person name="Ridler K.A."/>
            <person name="Schlessinger D."/>
            <person name="Schueler M.G."/>
            <person name="Sehra H.K."/>
            <person name="Shaw-Smith C."/>
            <person name="Shen H."/>
            <person name="Sheridan E.M."/>
            <person name="Shownkeen R."/>
            <person name="Skuce C.D."/>
            <person name="Smith M.L."/>
            <person name="Sotheran E.C."/>
            <person name="Steingruber H.E."/>
            <person name="Steward C.A."/>
            <person name="Storey R."/>
            <person name="Swann R.M."/>
            <person name="Swarbreck D."/>
            <person name="Tabor P.E."/>
            <person name="Taudien S."/>
            <person name="Taylor T."/>
            <person name="Teague B."/>
            <person name="Thomas K."/>
            <person name="Thorpe A."/>
            <person name="Timms K."/>
            <person name="Tracey A."/>
            <person name="Trevanion S."/>
            <person name="Tromans A.C."/>
            <person name="d'Urso M."/>
            <person name="Verduzco D."/>
            <person name="Villasana D."/>
            <person name="Waldron L."/>
            <person name="Wall M."/>
            <person name="Wang Q."/>
            <person name="Warren J."/>
            <person name="Warry G.L."/>
            <person name="Wei X."/>
            <person name="West A."/>
            <person name="Whitehead S.L."/>
            <person name="Whiteley M.N."/>
            <person name="Wilkinson J.E."/>
            <person name="Willey D.L."/>
            <person name="Williams G."/>
            <person name="Williams L."/>
            <person name="Williamson A."/>
            <person name="Williamson H."/>
            <person name="Wilming L."/>
            <person name="Woodmansey R.L."/>
            <person name="Wray P.W."/>
            <person name="Yen J."/>
            <person name="Zhang J."/>
            <person name="Zhou J."/>
            <person name="Zoghbi H."/>
            <person name="Zorilla S."/>
            <person name="Buck D."/>
            <person name="Reinhardt R."/>
            <person name="Poustka A."/>
            <person name="Rosenthal A."/>
            <person name="Lehrach H."/>
            <person name="Meindl A."/>
            <person name="Minx P.J."/>
            <person name="Hillier L.W."/>
            <person name="Willard H.F."/>
            <person name="Wilson R.K."/>
            <person name="Waterston R.H."/>
            <person name="Rice C.M."/>
            <person name="Vaudin M."/>
            <person name="Coulson A."/>
            <person name="Nelson D.L."/>
            <person name="Weinstock G."/>
            <person name="Sulston J.E."/>
            <person name="Durbin R.M."/>
            <person name="Hubbard T."/>
            <person name="Gibbs R.A."/>
            <person name="Beck S."/>
            <person name="Rogers J."/>
            <person name="Bentley D.R."/>
        </authorList>
    </citation>
    <scope>NUCLEOTIDE SEQUENCE [LARGE SCALE GENOMIC DNA]</scope>
</reference>
<reference key="6">
    <citation type="journal article" date="1997" name="Genomics">
        <title>Sequence-based exon prediction around the synaptophysin locus reveals a gene-rich area containing novel genes in human proximal Xp.</title>
        <authorList>
            <person name="Fisher S.E."/>
            <person name="Ciccodicola A."/>
            <person name="Tanaka K."/>
            <person name="Curci A."/>
            <person name="Desicato S."/>
            <person name="D'Urso M."/>
            <person name="Craig I.W."/>
        </authorList>
    </citation>
    <scope>NUCLEOTIDE SEQUENCE [GENOMIC DNA] OF 1211-1977</scope>
</reference>
<reference key="7">
    <citation type="journal article" date="2016" name="J. Biol. Chem.">
        <title>Characterization of C-terminal Splice Variants of Cav1.4 Ca2+ Channels in Human Retina.</title>
        <authorList>
            <person name="Haeseleer F."/>
            <person name="Williams B."/>
            <person name="Lee A."/>
        </authorList>
    </citation>
    <scope>ALTERNATIVE SPLICING (ISOFORMS 4; 5 AND 6)</scope>
    <scope>TISSUE SPECIFICITY</scope>
    <scope>INTERACTION WITH CABP4</scope>
    <scope>FUNCTION (ISOFORMS 1; 4; 5 AND 6)</scope>
    <scope>TRANSPORTER ACTIVITY (ISOFORMS 1; 4; 5 AND 6)</scope>
</reference>
<reference key="8">
    <citation type="journal article" date="2001" name="Hum. Genet.">
        <title>A summary of 20 CACNA1F mutations identified in 36 families with incomplete X-linked congenital stationary night blindness, and characterization of splice variants.</title>
        <authorList>
            <person name="Boycott K.M."/>
            <person name="Maybaum T.A."/>
            <person name="Naylor M.J."/>
            <person name="Weleber R.G."/>
            <person name="Robitaille J."/>
            <person name="Miyake Y."/>
            <person name="Bergen A.A.B."/>
            <person name="Pierpont M.E."/>
            <person name="Pearce W.G."/>
            <person name="Bech-Hansen N.T."/>
        </authorList>
    </citation>
    <scope>VARIANTS CSNB2A ASP-369; ASP-674 AND ASP-928</scope>
</reference>
<reference key="9">
    <citation type="journal article" date="2002" name="Eur. J. Hum. Genet.">
        <title>Thirty distinct CACNA1F mutations in 33 families with incomplete type of XLCSNB and Cacna1f expression profiling in mouse retina.</title>
        <authorList>
            <person name="Wutz K."/>
            <person name="Sauer C."/>
            <person name="Zrenner E."/>
            <person name="Lorenz B."/>
            <person name="Alitalo T."/>
            <person name="Broghammer M."/>
            <person name="Hergersberg M."/>
            <person name="de la Chapelle A."/>
            <person name="Weber B.H.F."/>
            <person name="Wissinger B."/>
            <person name="Meindl A."/>
            <person name="Pusch C.M."/>
        </authorList>
    </citation>
    <scope>VARIANTS CSNB2A ARG-74; PRO-229; ARG-261; ASP-369; CYS-753; PRO-860; ARG-1018; TRP-1060; PRO-1079; ARG-1499; ARG-1500 AND PRO-1508</scope>
</reference>
<reference key="10">
    <citation type="journal article" date="2002" name="Ophthalmic Genet.">
        <title>Infantile and childhood retinal blindness: a molecular perspective (The Franceschetti Lecture).</title>
        <authorList>
            <person name="Weleber R.G."/>
        </authorList>
    </citation>
    <scope>VARIANTS CSNB2A ARG-150 AND ILE-635</scope>
</reference>
<reference key="11">
    <citation type="journal article" date="2005" name="Proc. Natl. Acad. Sci. U.S.A.">
        <title>A CACNA1F mutation identified in an X-linked retinal disorder shifts the voltage dependence of Cav1.4 channel activation.</title>
        <authorList>
            <person name="Hemara-Wahanui A."/>
            <person name="Berjukow S."/>
            <person name="Hope C.I."/>
            <person name="Dearden P.K."/>
            <person name="Wu S.-B."/>
            <person name="Wilson-Wheeler J."/>
            <person name="Sharp D.M."/>
            <person name="Lundon-Treweek P."/>
            <person name="Clover G.M."/>
            <person name="Hoda J.-C."/>
            <person name="Striessnig J."/>
            <person name="Marksteiner R."/>
            <person name="Hering S."/>
            <person name="Maw M.A."/>
        </authorList>
    </citation>
    <scope>VARIANT CSNB2A THR-756</scope>
    <scope>CHARACTERIZATION OF VARIANT CSNB2A THR-756</scope>
    <scope>FUNCTION</scope>
    <scope>TRANSPORTER ACTIVITY</scope>
</reference>
<reference key="12">
    <citation type="journal article" date="2006" name="Am. J. Hum. Genet.">
        <title>Mutations in CABP4, the gene encoding the Ca2+-binding protein 4, cause autosomal recessive night blindness.</title>
        <authorList>
            <person name="Zeitz C."/>
            <person name="Kloeckener-Gruissem B."/>
            <person name="Forster U."/>
            <person name="Kohl S."/>
            <person name="Magyar I."/>
            <person name="Wissinger B."/>
            <person name="Matyas G."/>
            <person name="Borruat F.-X."/>
            <person name="Schorderet D.F."/>
            <person name="Zrenner E."/>
            <person name="Munier F.L."/>
            <person name="Berger W."/>
        </authorList>
    </citation>
    <scope>VARIANT THR-746</scope>
</reference>
<reference key="13">
    <citation type="journal article" date="2006" name="J. Med. Genet.">
        <title>X linked cone-rod dystrophy, CORDX3, is caused by a mutation in the CACNA1F gene.</title>
        <authorList>
            <person name="Jalkanen R."/>
            <person name="Maentyjaervi M."/>
            <person name="Tobias R."/>
            <person name="Isosomppi J."/>
            <person name="Sankila E.-M."/>
            <person name="Alitalo T."/>
            <person name="Bech-Hansen N.T."/>
        </authorList>
    </citation>
    <scope>INVOLVEMENT IN CORDX3</scope>
</reference>
<reference key="14">
    <citation type="journal article" date="2007" name="Invest. Ophthalmol. Vis. Sci.">
        <title>A novel CACNA1F gene mutation causes Aland Island eye disease.</title>
        <authorList>
            <person name="Jalkanen R."/>
            <person name="Bech-Hansen N.T."/>
            <person name="Tobias R."/>
            <person name="Sankila E.-M."/>
            <person name="Maentyjaervi M."/>
            <person name="Forsius H."/>
            <person name="de la Chapelle A."/>
            <person name="Alitalo T."/>
        </authorList>
    </citation>
    <scope>INVOLVEMENT IN AIED</scope>
</reference>
<reference key="15">
    <citation type="journal article" date="2011" name="Mol. Vis.">
        <title>A novel p.Gly603Arg mutation in CACNA1F causes Aland island eye disease and incomplete congenital stationary night blindness phenotypes in a family.</title>
        <authorList>
            <person name="Vincent A."/>
            <person name="Wright T."/>
            <person name="Day M.A."/>
            <person name="Westall C.A."/>
            <person name="Heon E."/>
        </authorList>
    </citation>
    <scope>VARIANT CSNB2A ARG-603</scope>
    <scope>VARIANT AIED ARG-603</scope>
</reference>
<proteinExistence type="evidence at protein level"/>